<evidence type="ECO:0000255" key="1">
    <source>
        <dbReference type="HAMAP-Rule" id="MF_00083"/>
    </source>
</evidence>
<organism>
    <name type="scientific">Streptococcus pneumoniae serotype 4 (strain ATCC BAA-334 / TIGR4)</name>
    <dbReference type="NCBI Taxonomy" id="170187"/>
    <lineage>
        <taxon>Bacteria</taxon>
        <taxon>Bacillati</taxon>
        <taxon>Bacillota</taxon>
        <taxon>Bacilli</taxon>
        <taxon>Lactobacillales</taxon>
        <taxon>Streptococcaceae</taxon>
        <taxon>Streptococcus</taxon>
    </lineage>
</organism>
<feature type="chain" id="PRO_0000187828" description="Peptidyl-tRNA hydrolase">
    <location>
        <begin position="1"/>
        <end position="189"/>
    </location>
</feature>
<feature type="active site" description="Proton acceptor" evidence="1">
    <location>
        <position position="20"/>
    </location>
</feature>
<feature type="binding site" evidence="1">
    <location>
        <position position="15"/>
    </location>
    <ligand>
        <name>tRNA</name>
        <dbReference type="ChEBI" id="CHEBI:17843"/>
    </ligand>
</feature>
<feature type="binding site" evidence="1">
    <location>
        <position position="66"/>
    </location>
    <ligand>
        <name>tRNA</name>
        <dbReference type="ChEBI" id="CHEBI:17843"/>
    </ligand>
</feature>
<feature type="binding site" evidence="1">
    <location>
        <position position="68"/>
    </location>
    <ligand>
        <name>tRNA</name>
        <dbReference type="ChEBI" id="CHEBI:17843"/>
    </ligand>
</feature>
<feature type="binding site" evidence="1">
    <location>
        <position position="114"/>
    </location>
    <ligand>
        <name>tRNA</name>
        <dbReference type="ChEBI" id="CHEBI:17843"/>
    </ligand>
</feature>
<feature type="site" description="Discriminates between blocked and unblocked aminoacyl-tRNA" evidence="1">
    <location>
        <position position="10"/>
    </location>
</feature>
<feature type="site" description="Stabilizes the basic form of H active site to accept a proton" evidence="1">
    <location>
        <position position="93"/>
    </location>
</feature>
<keyword id="KW-0963">Cytoplasm</keyword>
<keyword id="KW-0378">Hydrolase</keyword>
<keyword id="KW-1185">Reference proteome</keyword>
<keyword id="KW-0694">RNA-binding</keyword>
<keyword id="KW-0820">tRNA-binding</keyword>
<comment type="function">
    <text evidence="1">Hydrolyzes ribosome-free peptidyl-tRNAs (with 1 or more amino acids incorporated), which drop off the ribosome during protein synthesis, or as a result of ribosome stalling.</text>
</comment>
<comment type="function">
    <text evidence="1">Catalyzes the release of premature peptidyl moieties from peptidyl-tRNA molecules trapped in stalled 50S ribosomal subunits, and thus maintains levels of free tRNAs and 50S ribosomes.</text>
</comment>
<comment type="catalytic activity">
    <reaction evidence="1">
        <text>an N-acyl-L-alpha-aminoacyl-tRNA + H2O = an N-acyl-L-amino acid + a tRNA + H(+)</text>
        <dbReference type="Rhea" id="RHEA:54448"/>
        <dbReference type="Rhea" id="RHEA-COMP:10123"/>
        <dbReference type="Rhea" id="RHEA-COMP:13883"/>
        <dbReference type="ChEBI" id="CHEBI:15377"/>
        <dbReference type="ChEBI" id="CHEBI:15378"/>
        <dbReference type="ChEBI" id="CHEBI:59874"/>
        <dbReference type="ChEBI" id="CHEBI:78442"/>
        <dbReference type="ChEBI" id="CHEBI:138191"/>
        <dbReference type="EC" id="3.1.1.29"/>
    </reaction>
</comment>
<comment type="subunit">
    <text evidence="1">Monomer.</text>
</comment>
<comment type="subcellular location">
    <subcellularLocation>
        <location evidence="1">Cytoplasm</location>
    </subcellularLocation>
</comment>
<comment type="similarity">
    <text evidence="1">Belongs to the PTH family.</text>
</comment>
<dbReference type="EC" id="3.1.1.29" evidence="1"/>
<dbReference type="EMBL" id="AE005672">
    <property type="protein sequence ID" value="AAK74198.1"/>
    <property type="molecule type" value="Genomic_DNA"/>
</dbReference>
<dbReference type="PIR" id="E95000">
    <property type="entry name" value="E95000"/>
</dbReference>
<dbReference type="RefSeq" id="WP_000163932.1">
    <property type="nucleotide sequence ID" value="NZ_CP155539.1"/>
</dbReference>
<dbReference type="SMR" id="Q97TD1"/>
<dbReference type="PaxDb" id="170187-SP_0005"/>
<dbReference type="EnsemblBacteria" id="AAK74198">
    <property type="protein sequence ID" value="AAK74198"/>
    <property type="gene ID" value="SP_0005"/>
</dbReference>
<dbReference type="GeneID" id="45652531"/>
<dbReference type="KEGG" id="spn:SP_0005"/>
<dbReference type="eggNOG" id="COG0193">
    <property type="taxonomic scope" value="Bacteria"/>
</dbReference>
<dbReference type="PhylomeDB" id="Q97TD1"/>
<dbReference type="BioCyc" id="SPNE170187:G1FZB-5-MONOMER"/>
<dbReference type="Proteomes" id="UP000000585">
    <property type="component" value="Chromosome"/>
</dbReference>
<dbReference type="GO" id="GO:0005737">
    <property type="term" value="C:cytoplasm"/>
    <property type="evidence" value="ECO:0007669"/>
    <property type="project" value="UniProtKB-SubCell"/>
</dbReference>
<dbReference type="GO" id="GO:0004045">
    <property type="term" value="F:peptidyl-tRNA hydrolase activity"/>
    <property type="evidence" value="ECO:0007669"/>
    <property type="project" value="UniProtKB-UniRule"/>
</dbReference>
<dbReference type="GO" id="GO:0000049">
    <property type="term" value="F:tRNA binding"/>
    <property type="evidence" value="ECO:0007669"/>
    <property type="project" value="UniProtKB-UniRule"/>
</dbReference>
<dbReference type="GO" id="GO:0006515">
    <property type="term" value="P:protein quality control for misfolded or incompletely synthesized proteins"/>
    <property type="evidence" value="ECO:0007669"/>
    <property type="project" value="UniProtKB-UniRule"/>
</dbReference>
<dbReference type="GO" id="GO:0072344">
    <property type="term" value="P:rescue of stalled ribosome"/>
    <property type="evidence" value="ECO:0007669"/>
    <property type="project" value="UniProtKB-UniRule"/>
</dbReference>
<dbReference type="CDD" id="cd00462">
    <property type="entry name" value="PTH"/>
    <property type="match status" value="1"/>
</dbReference>
<dbReference type="FunFam" id="3.40.50.1470:FF:000001">
    <property type="entry name" value="Peptidyl-tRNA hydrolase"/>
    <property type="match status" value="1"/>
</dbReference>
<dbReference type="Gene3D" id="3.40.50.1470">
    <property type="entry name" value="Peptidyl-tRNA hydrolase"/>
    <property type="match status" value="1"/>
</dbReference>
<dbReference type="HAMAP" id="MF_00083">
    <property type="entry name" value="Pept_tRNA_hydro_bact"/>
    <property type="match status" value="1"/>
</dbReference>
<dbReference type="InterPro" id="IPR001328">
    <property type="entry name" value="Pept_tRNA_hydro"/>
</dbReference>
<dbReference type="InterPro" id="IPR018171">
    <property type="entry name" value="Pept_tRNA_hydro_CS"/>
</dbReference>
<dbReference type="InterPro" id="IPR036416">
    <property type="entry name" value="Pept_tRNA_hydro_sf"/>
</dbReference>
<dbReference type="NCBIfam" id="TIGR00447">
    <property type="entry name" value="pth"/>
    <property type="match status" value="1"/>
</dbReference>
<dbReference type="PANTHER" id="PTHR17224">
    <property type="entry name" value="PEPTIDYL-TRNA HYDROLASE"/>
    <property type="match status" value="1"/>
</dbReference>
<dbReference type="PANTHER" id="PTHR17224:SF1">
    <property type="entry name" value="PEPTIDYL-TRNA HYDROLASE"/>
    <property type="match status" value="1"/>
</dbReference>
<dbReference type="Pfam" id="PF01195">
    <property type="entry name" value="Pept_tRNA_hydro"/>
    <property type="match status" value="1"/>
</dbReference>
<dbReference type="SUPFAM" id="SSF53178">
    <property type="entry name" value="Peptidyl-tRNA hydrolase-like"/>
    <property type="match status" value="1"/>
</dbReference>
<dbReference type="PROSITE" id="PS01195">
    <property type="entry name" value="PEPT_TRNA_HYDROL_1"/>
    <property type="match status" value="1"/>
</dbReference>
<dbReference type="PROSITE" id="PS01196">
    <property type="entry name" value="PEPT_TRNA_HYDROL_2"/>
    <property type="match status" value="1"/>
</dbReference>
<name>PTH_STRPN</name>
<reference key="1">
    <citation type="journal article" date="2001" name="Science">
        <title>Complete genome sequence of a virulent isolate of Streptococcus pneumoniae.</title>
        <authorList>
            <person name="Tettelin H."/>
            <person name="Nelson K.E."/>
            <person name="Paulsen I.T."/>
            <person name="Eisen J.A."/>
            <person name="Read T.D."/>
            <person name="Peterson S.N."/>
            <person name="Heidelberg J.F."/>
            <person name="DeBoy R.T."/>
            <person name="Haft D.H."/>
            <person name="Dodson R.J."/>
            <person name="Durkin A.S."/>
            <person name="Gwinn M.L."/>
            <person name="Kolonay J.F."/>
            <person name="Nelson W.C."/>
            <person name="Peterson J.D."/>
            <person name="Umayam L.A."/>
            <person name="White O."/>
            <person name="Salzberg S.L."/>
            <person name="Lewis M.R."/>
            <person name="Radune D."/>
            <person name="Holtzapple E.K."/>
            <person name="Khouri H.M."/>
            <person name="Wolf A.M."/>
            <person name="Utterback T.R."/>
            <person name="Hansen C.L."/>
            <person name="McDonald L.A."/>
            <person name="Feldblyum T.V."/>
            <person name="Angiuoli S.V."/>
            <person name="Dickinson T."/>
            <person name="Hickey E.K."/>
            <person name="Holt I.E."/>
            <person name="Loftus B.J."/>
            <person name="Yang F."/>
            <person name="Smith H.O."/>
            <person name="Venter J.C."/>
            <person name="Dougherty B.A."/>
            <person name="Morrison D.A."/>
            <person name="Hollingshead S.K."/>
            <person name="Fraser C.M."/>
        </authorList>
    </citation>
    <scope>NUCLEOTIDE SEQUENCE [LARGE SCALE GENOMIC DNA]</scope>
    <source>
        <strain>ATCC BAA-334 / TIGR4</strain>
    </source>
</reference>
<proteinExistence type="inferred from homology"/>
<protein>
    <recommendedName>
        <fullName evidence="1">Peptidyl-tRNA hydrolase</fullName>
        <shortName evidence="1">Pth</shortName>
        <ecNumber evidence="1">3.1.1.29</ecNumber>
    </recommendedName>
</protein>
<sequence>MTKLLVGLGNPGDKYFETKHNVGFMLIDQLAKKQNVTFTHDKIFQADLASFFLNGEKIYLVKPTTFMNESGKAVHALLTYYGLDIDDLLIIYDDLDMEVGKIRLRAKGSAGGHNGIKSIIQHIGTQVFNRVKIGIGRPKNGMSVVHHVLSKFDRDDYIGILQSVDKVDDSVNYYLQEKNFEKTMQRYNG</sequence>
<gene>
    <name evidence="1" type="primary">pth</name>
    <name type="ordered locus">SP_0005</name>
</gene>
<accession>Q97TD1</accession>